<feature type="chain" id="PRO_1000060442" description="UPF0178 protein Clos_2709">
    <location>
        <begin position="1"/>
        <end position="155"/>
    </location>
</feature>
<name>Y2709_ALKOO</name>
<dbReference type="EMBL" id="CP000853">
    <property type="protein sequence ID" value="ABW20240.1"/>
    <property type="molecule type" value="Genomic_DNA"/>
</dbReference>
<dbReference type="RefSeq" id="WP_012160547.1">
    <property type="nucleotide sequence ID" value="NC_009922.1"/>
</dbReference>
<dbReference type="STRING" id="350688.Clos_2709"/>
<dbReference type="KEGG" id="aoe:Clos_2709"/>
<dbReference type="eggNOG" id="COG1671">
    <property type="taxonomic scope" value="Bacteria"/>
</dbReference>
<dbReference type="HOGENOM" id="CLU_106619_0_0_9"/>
<dbReference type="OrthoDB" id="9798918at2"/>
<dbReference type="Proteomes" id="UP000000269">
    <property type="component" value="Chromosome"/>
</dbReference>
<dbReference type="HAMAP" id="MF_00489">
    <property type="entry name" value="UPF0178"/>
    <property type="match status" value="1"/>
</dbReference>
<dbReference type="InterPro" id="IPR003791">
    <property type="entry name" value="UPF0178"/>
</dbReference>
<dbReference type="NCBIfam" id="NF001095">
    <property type="entry name" value="PRK00124.1"/>
    <property type="match status" value="1"/>
</dbReference>
<dbReference type="PANTHER" id="PTHR35146">
    <property type="entry name" value="UPF0178 PROTEIN YAII"/>
    <property type="match status" value="1"/>
</dbReference>
<dbReference type="PANTHER" id="PTHR35146:SF1">
    <property type="entry name" value="UPF0178 PROTEIN YAII"/>
    <property type="match status" value="1"/>
</dbReference>
<dbReference type="Pfam" id="PF02639">
    <property type="entry name" value="DUF188"/>
    <property type="match status" value="1"/>
</dbReference>
<gene>
    <name type="ordered locus">Clos_2709</name>
</gene>
<accession>A8MKA8</accession>
<comment type="similarity">
    <text evidence="1">Belongs to the UPF0178 family.</text>
</comment>
<organism>
    <name type="scientific">Alkaliphilus oremlandii (strain OhILAs)</name>
    <name type="common">Clostridium oremlandii (strain OhILAs)</name>
    <dbReference type="NCBI Taxonomy" id="350688"/>
    <lineage>
        <taxon>Bacteria</taxon>
        <taxon>Bacillati</taxon>
        <taxon>Bacillota</taxon>
        <taxon>Clostridia</taxon>
        <taxon>Peptostreptococcales</taxon>
        <taxon>Natronincolaceae</taxon>
        <taxon>Alkaliphilus</taxon>
    </lineage>
</organism>
<sequence>MKILVDADGCPVKDIILKIAKKYHIKVVMVKNICHELHDDYAEIITVDQGRDVADITLINHTEKGDIVITQDYGVAAMALAKNAHAIHQNGWAYTDENIDELLMKRHMGQEIRRKHKKYTKIPKRTKEDDLQFERFLIHYLDENILKIRGHQDEI</sequence>
<keyword id="KW-1185">Reference proteome</keyword>
<reference key="1">
    <citation type="submission" date="2007-10" db="EMBL/GenBank/DDBJ databases">
        <title>Complete genome of Alkaliphilus oremlandii OhILAs.</title>
        <authorList>
            <person name="Copeland A."/>
            <person name="Lucas S."/>
            <person name="Lapidus A."/>
            <person name="Barry K."/>
            <person name="Detter J.C."/>
            <person name="Glavina del Rio T."/>
            <person name="Hammon N."/>
            <person name="Israni S."/>
            <person name="Dalin E."/>
            <person name="Tice H."/>
            <person name="Pitluck S."/>
            <person name="Chain P."/>
            <person name="Malfatti S."/>
            <person name="Shin M."/>
            <person name="Vergez L."/>
            <person name="Schmutz J."/>
            <person name="Larimer F."/>
            <person name="Land M."/>
            <person name="Hauser L."/>
            <person name="Kyrpides N."/>
            <person name="Mikhailova N."/>
            <person name="Stolz J.F."/>
            <person name="Dawson A."/>
            <person name="Fisher E."/>
            <person name="Crable B."/>
            <person name="Perera E."/>
            <person name="Lisak J."/>
            <person name="Ranganathan M."/>
            <person name="Basu P."/>
            <person name="Richardson P."/>
        </authorList>
    </citation>
    <scope>NUCLEOTIDE SEQUENCE [LARGE SCALE GENOMIC DNA]</scope>
    <source>
        <strain>OhILAs</strain>
    </source>
</reference>
<protein>
    <recommendedName>
        <fullName evidence="1">UPF0178 protein Clos_2709</fullName>
    </recommendedName>
</protein>
<proteinExistence type="inferred from homology"/>
<evidence type="ECO:0000255" key="1">
    <source>
        <dbReference type="HAMAP-Rule" id="MF_00489"/>
    </source>
</evidence>